<organism>
    <name type="scientific">Plasmopara viticola</name>
    <name type="common">Downy mildew of grapevine</name>
    <name type="synonym">Botrytis viticola</name>
    <dbReference type="NCBI Taxonomy" id="143451"/>
    <lineage>
        <taxon>Eukaryota</taxon>
        <taxon>Sar</taxon>
        <taxon>Stramenopiles</taxon>
        <taxon>Oomycota</taxon>
        <taxon>Peronosporales</taxon>
        <taxon>Peronosporaceae</taxon>
        <taxon>Plasmopara</taxon>
    </lineage>
</organism>
<proteinExistence type="evidence at transcript level"/>
<dbReference type="GlyCosmos" id="P0CV34">
    <property type="glycosylation" value="1 site, No reported glycans"/>
</dbReference>
<dbReference type="GO" id="GO:0005576">
    <property type="term" value="C:extracellular region"/>
    <property type="evidence" value="ECO:0007669"/>
    <property type="project" value="UniProtKB-SubCell"/>
</dbReference>
<dbReference type="GO" id="GO:0042025">
    <property type="term" value="C:host cell nucleus"/>
    <property type="evidence" value="ECO:0007669"/>
    <property type="project" value="UniProtKB-SubCell"/>
</dbReference>
<name>RLR91_PLAVT</name>
<accession>P0CV34</accession>
<feature type="signal peptide" evidence="1">
    <location>
        <begin position="1"/>
        <end position="18"/>
    </location>
</feature>
<feature type="chain" id="PRO_0000447943" description="Secreted RxLR effector protein 91">
    <location>
        <begin position="19"/>
        <end position="138"/>
    </location>
</feature>
<feature type="short sequence motif" description="RxLR" evidence="6">
    <location>
        <begin position="34"/>
        <end position="37"/>
    </location>
</feature>
<feature type="glycosylation site" description="N-linked (GlcNAc...) asparagine" evidence="2">
    <location>
        <position position="93"/>
    </location>
</feature>
<sequence>MVIPHIICLPMALHLWTCRFLSLGRPATNRRNCRRLRRRAVHRQATRPTRRIHHSAPQSFPQGLFNCAFVLLRRHALCRRLVGISTHVRAFKNCSKSDGPRRHKRTGQNSRVCPCGSWIYRIVSDRSGAFKCARRRVL</sequence>
<gene>
    <name evidence="4" type="primary">RXLR91</name>
</gene>
<keyword id="KW-0325">Glycoprotein</keyword>
<keyword id="KW-1048">Host nucleus</keyword>
<keyword id="KW-0964">Secreted</keyword>
<keyword id="KW-0732">Signal</keyword>
<keyword id="KW-0843">Virulence</keyword>
<comment type="function">
    <text evidence="3">Secreted effector that completely suppresses the host cell death induced by cell death-inducing proteins.</text>
</comment>
<comment type="subcellular location">
    <subcellularLocation>
        <location evidence="3">Secreted</location>
    </subcellularLocation>
    <subcellularLocation>
        <location evidence="3">Host nucleus</location>
    </subcellularLocation>
    <text evidence="3">Accumulates at the margin of the nucleolus, but is absent within it.</text>
</comment>
<comment type="domain">
    <text evidence="6">Has the canonical translocation RxLR motif, but lacks the canonical EER motif, which characterizes most oomycete effectors identified so far.</text>
</comment>
<comment type="similarity">
    <text evidence="5">Belongs to the RxLR effector family.</text>
</comment>
<protein>
    <recommendedName>
        <fullName evidence="4">Secreted RxLR effector protein 91</fullName>
    </recommendedName>
</protein>
<evidence type="ECO:0000255" key="1"/>
<evidence type="ECO:0000255" key="2">
    <source>
        <dbReference type="PROSITE-ProRule" id="PRU00498"/>
    </source>
</evidence>
<evidence type="ECO:0000269" key="3">
    <source>
    </source>
</evidence>
<evidence type="ECO:0000303" key="4">
    <source>
    </source>
</evidence>
<evidence type="ECO:0000305" key="5"/>
<evidence type="ECO:0000305" key="6">
    <source>
    </source>
</evidence>
<reference key="1">
    <citation type="journal article" date="2018" name="Front. Plant Sci.">
        <title>In planta functional analysis and subcellular localization of the oomycete pathogen Plasmopara viticola candidate RXLR effector repertoire.</title>
        <authorList>
            <person name="Liu Y."/>
            <person name="Lan X."/>
            <person name="Song S."/>
            <person name="Yin L."/>
            <person name="Dry I.B."/>
            <person name="Qu J."/>
            <person name="Xiang J."/>
            <person name="Lu J."/>
        </authorList>
    </citation>
    <scope>NUCLEOTIDE SEQUENCE [MRNA]</scope>
    <scope>DOMAIN</scope>
    <scope>FUNCTION</scope>
    <scope>SUBCELLULAR LOCATION</scope>
</reference>